<keyword id="KW-0032">Aminotransferase</keyword>
<keyword id="KW-0963">Cytoplasm</keyword>
<keyword id="KW-0315">Glutamine amidotransferase</keyword>
<keyword id="KW-1185">Reference proteome</keyword>
<keyword id="KW-0677">Repeat</keyword>
<keyword id="KW-0808">Transferase</keyword>
<comment type="function">
    <text evidence="1">Catalyzes the first step in hexosamine metabolism, converting fructose-6P into glucosamine-6P using glutamine as a nitrogen source.</text>
</comment>
<comment type="catalytic activity">
    <reaction evidence="1">
        <text>D-fructose 6-phosphate + L-glutamine = D-glucosamine 6-phosphate + L-glutamate</text>
        <dbReference type="Rhea" id="RHEA:13237"/>
        <dbReference type="ChEBI" id="CHEBI:29985"/>
        <dbReference type="ChEBI" id="CHEBI:58359"/>
        <dbReference type="ChEBI" id="CHEBI:58725"/>
        <dbReference type="ChEBI" id="CHEBI:61527"/>
        <dbReference type="EC" id="2.6.1.16"/>
    </reaction>
</comment>
<comment type="subunit">
    <text evidence="1">Homodimer.</text>
</comment>
<comment type="subcellular location">
    <subcellularLocation>
        <location evidence="1">Cytoplasm</location>
    </subcellularLocation>
</comment>
<name>GLMS_LEPIN</name>
<dbReference type="EC" id="2.6.1.16" evidence="1"/>
<dbReference type="EMBL" id="AE010300">
    <property type="protein sequence ID" value="AAN50999.1"/>
    <property type="molecule type" value="Genomic_DNA"/>
</dbReference>
<dbReference type="RefSeq" id="NP_713981.1">
    <property type="nucleotide sequence ID" value="NC_004342.2"/>
</dbReference>
<dbReference type="RefSeq" id="WP_000334327.1">
    <property type="nucleotide sequence ID" value="NC_004342.2"/>
</dbReference>
<dbReference type="SMR" id="Q8EZQ1"/>
<dbReference type="FunCoup" id="Q8EZQ1">
    <property type="interactions" value="404"/>
</dbReference>
<dbReference type="STRING" id="189518.LA_3801"/>
<dbReference type="PaxDb" id="189518-LA_3801"/>
<dbReference type="EnsemblBacteria" id="AAN50999">
    <property type="protein sequence ID" value="AAN50999"/>
    <property type="gene ID" value="LA_3801"/>
</dbReference>
<dbReference type="GeneID" id="61143797"/>
<dbReference type="KEGG" id="lil:LA_3801"/>
<dbReference type="PATRIC" id="fig|189518.3.peg.3770"/>
<dbReference type="HOGENOM" id="CLU_012520_5_2_12"/>
<dbReference type="InParanoid" id="Q8EZQ1"/>
<dbReference type="OrthoDB" id="106547at2"/>
<dbReference type="Proteomes" id="UP000001408">
    <property type="component" value="Chromosome I"/>
</dbReference>
<dbReference type="GO" id="GO:0005829">
    <property type="term" value="C:cytosol"/>
    <property type="evidence" value="ECO:0000318"/>
    <property type="project" value="GO_Central"/>
</dbReference>
<dbReference type="GO" id="GO:0097367">
    <property type="term" value="F:carbohydrate derivative binding"/>
    <property type="evidence" value="ECO:0007669"/>
    <property type="project" value="InterPro"/>
</dbReference>
<dbReference type="GO" id="GO:0004360">
    <property type="term" value="F:glutamine-fructose-6-phosphate transaminase (isomerizing) activity"/>
    <property type="evidence" value="ECO:0000318"/>
    <property type="project" value="GO_Central"/>
</dbReference>
<dbReference type="GO" id="GO:0005975">
    <property type="term" value="P:carbohydrate metabolic process"/>
    <property type="evidence" value="ECO:0007669"/>
    <property type="project" value="UniProtKB-UniRule"/>
</dbReference>
<dbReference type="GO" id="GO:0006002">
    <property type="term" value="P:fructose 6-phosphate metabolic process"/>
    <property type="evidence" value="ECO:0000318"/>
    <property type="project" value="GO_Central"/>
</dbReference>
<dbReference type="GO" id="GO:0006487">
    <property type="term" value="P:protein N-linked glycosylation"/>
    <property type="evidence" value="ECO:0000318"/>
    <property type="project" value="GO_Central"/>
</dbReference>
<dbReference type="GO" id="GO:0006047">
    <property type="term" value="P:UDP-N-acetylglucosamine metabolic process"/>
    <property type="evidence" value="ECO:0000318"/>
    <property type="project" value="GO_Central"/>
</dbReference>
<dbReference type="CDD" id="cd00714">
    <property type="entry name" value="GFAT"/>
    <property type="match status" value="1"/>
</dbReference>
<dbReference type="CDD" id="cd05008">
    <property type="entry name" value="SIS_GlmS_GlmD_1"/>
    <property type="match status" value="1"/>
</dbReference>
<dbReference type="CDD" id="cd05009">
    <property type="entry name" value="SIS_GlmS_GlmD_2"/>
    <property type="match status" value="1"/>
</dbReference>
<dbReference type="FunFam" id="3.40.50.10490:FF:000001">
    <property type="entry name" value="Glutamine--fructose-6-phosphate aminotransferase [isomerizing]"/>
    <property type="match status" value="1"/>
</dbReference>
<dbReference type="FunFam" id="3.40.50.10490:FF:000052">
    <property type="entry name" value="Glutamine--fructose-6-phosphate aminotransferase [isomerizing]"/>
    <property type="match status" value="1"/>
</dbReference>
<dbReference type="FunFam" id="3.60.20.10:FF:000065">
    <property type="entry name" value="Glutamine--fructose-6-phosphate aminotransferase [isomerizing]"/>
    <property type="match status" value="1"/>
</dbReference>
<dbReference type="Gene3D" id="3.40.50.10490">
    <property type="entry name" value="Glucose-6-phosphate isomerase like protein, domain 1"/>
    <property type="match status" value="2"/>
</dbReference>
<dbReference type="Gene3D" id="3.60.20.10">
    <property type="entry name" value="Glutamine Phosphoribosylpyrophosphate, subunit 1, domain 1"/>
    <property type="match status" value="1"/>
</dbReference>
<dbReference type="HAMAP" id="MF_00164">
    <property type="entry name" value="GlmS"/>
    <property type="match status" value="1"/>
</dbReference>
<dbReference type="InterPro" id="IPR017932">
    <property type="entry name" value="GATase_2_dom"/>
</dbReference>
<dbReference type="InterPro" id="IPR005855">
    <property type="entry name" value="GFAT"/>
</dbReference>
<dbReference type="InterPro" id="IPR047084">
    <property type="entry name" value="GFAT_N"/>
</dbReference>
<dbReference type="InterPro" id="IPR035466">
    <property type="entry name" value="GlmS/AgaS_SIS"/>
</dbReference>
<dbReference type="InterPro" id="IPR035490">
    <property type="entry name" value="GlmS/FrlB_SIS"/>
</dbReference>
<dbReference type="InterPro" id="IPR029055">
    <property type="entry name" value="Ntn_hydrolases_N"/>
</dbReference>
<dbReference type="InterPro" id="IPR001347">
    <property type="entry name" value="SIS_dom"/>
</dbReference>
<dbReference type="InterPro" id="IPR046348">
    <property type="entry name" value="SIS_dom_sf"/>
</dbReference>
<dbReference type="NCBIfam" id="TIGR01135">
    <property type="entry name" value="glmS"/>
    <property type="match status" value="1"/>
</dbReference>
<dbReference type="NCBIfam" id="NF001484">
    <property type="entry name" value="PRK00331.1"/>
    <property type="match status" value="1"/>
</dbReference>
<dbReference type="PANTHER" id="PTHR10937">
    <property type="entry name" value="GLUCOSAMINE--FRUCTOSE-6-PHOSPHATE AMINOTRANSFERASE, ISOMERIZING"/>
    <property type="match status" value="1"/>
</dbReference>
<dbReference type="PANTHER" id="PTHR10937:SF0">
    <property type="entry name" value="GLUTAMINE--FRUCTOSE-6-PHOSPHATE TRANSAMINASE (ISOMERIZING)"/>
    <property type="match status" value="1"/>
</dbReference>
<dbReference type="Pfam" id="PF13522">
    <property type="entry name" value="GATase_6"/>
    <property type="match status" value="1"/>
</dbReference>
<dbReference type="Pfam" id="PF01380">
    <property type="entry name" value="SIS"/>
    <property type="match status" value="2"/>
</dbReference>
<dbReference type="SUPFAM" id="SSF56235">
    <property type="entry name" value="N-terminal nucleophile aminohydrolases (Ntn hydrolases)"/>
    <property type="match status" value="1"/>
</dbReference>
<dbReference type="SUPFAM" id="SSF53697">
    <property type="entry name" value="SIS domain"/>
    <property type="match status" value="1"/>
</dbReference>
<dbReference type="PROSITE" id="PS51278">
    <property type="entry name" value="GATASE_TYPE_2"/>
    <property type="match status" value="1"/>
</dbReference>
<dbReference type="PROSITE" id="PS51464">
    <property type="entry name" value="SIS"/>
    <property type="match status" value="2"/>
</dbReference>
<sequence>MCGIVGYAGKKNAESVLVVGLICLEYRGYDSAGIAVLDQGDILVRKSKGKIKDLEAYLREFPAPGNVGIGHTRWATHGEPNQINAHPHTDTNSTVAVVHNGIIENYLELKSQLKKKGHVFQSLTDTEVLPHLLEESKKNGKSNKDSFLELFGKIHGKWAISSVFETEPDRVYFAQDGAPLLIGKGKGEYFLASDISPLTRNCEEVYYVNSGEWGYFSQNEFKLFDFSGKELNPTFKKQELRWEDLDKGGYPHYMIKEIHEQAGIFRKIIQERILENSEIVFPEIKLSKDVLSRVNRIIIQAAGTSYYAGMIGKHYLENFAKIQTDTEASSEFRYRNPVVEGDTLIMGISQSGETADTLASIHEAKAKFIKVVSLVNNVNSTIARESDSYIRTDAGPEIGVASTKAFTAQVLNLLLFSIYMANLKWLISDEEQKILIEEIKLLPAKIDRILAQASKIEEMSSHFTTAKDFIFLGRTYNHPVAMEGALKLKEISYIHASGYAGGEFKHGPIALITNEVPVVCIAPKSEIYTKMVSNIQEIKARKGIIISIVTEGDQEAKSLSDYCFEIPECSEILSPILNVIPLQLLAYYSAIARGCPPDQPRNLAKSVTVE</sequence>
<feature type="initiator methionine" description="Removed" evidence="1">
    <location>
        <position position="1"/>
    </location>
</feature>
<feature type="chain" id="PRO_0000135350" description="Glutamine--fructose-6-phosphate aminotransferase [isomerizing]">
    <location>
        <begin position="2"/>
        <end position="610"/>
    </location>
</feature>
<feature type="domain" description="Glutamine amidotransferase type-2" evidence="1">
    <location>
        <begin position="2"/>
        <end position="219"/>
    </location>
</feature>
<feature type="domain" description="SIS 1" evidence="1">
    <location>
        <begin position="287"/>
        <end position="431"/>
    </location>
</feature>
<feature type="domain" description="SIS 2" evidence="1">
    <location>
        <begin position="459"/>
        <end position="600"/>
    </location>
</feature>
<feature type="active site" description="Nucleophile; for GATase activity" evidence="1">
    <location>
        <position position="2"/>
    </location>
</feature>
<feature type="active site" description="For Fru-6P isomerization activity" evidence="1">
    <location>
        <position position="605"/>
    </location>
</feature>
<reference key="1">
    <citation type="journal article" date="2003" name="Nature">
        <title>Unique physiological and pathogenic features of Leptospira interrogans revealed by whole-genome sequencing.</title>
        <authorList>
            <person name="Ren S.-X."/>
            <person name="Fu G."/>
            <person name="Jiang X.-G."/>
            <person name="Zeng R."/>
            <person name="Miao Y.-G."/>
            <person name="Xu H."/>
            <person name="Zhang Y.-X."/>
            <person name="Xiong H."/>
            <person name="Lu G."/>
            <person name="Lu L.-F."/>
            <person name="Jiang H.-Q."/>
            <person name="Jia J."/>
            <person name="Tu Y.-F."/>
            <person name="Jiang J.-X."/>
            <person name="Gu W.-Y."/>
            <person name="Zhang Y.-Q."/>
            <person name="Cai Z."/>
            <person name="Sheng H.-H."/>
            <person name="Yin H.-F."/>
            <person name="Zhang Y."/>
            <person name="Zhu G.-F."/>
            <person name="Wan M."/>
            <person name="Huang H.-L."/>
            <person name="Qian Z."/>
            <person name="Wang S.-Y."/>
            <person name="Ma W."/>
            <person name="Yao Z.-J."/>
            <person name="Shen Y."/>
            <person name="Qiang B.-Q."/>
            <person name="Xia Q.-C."/>
            <person name="Guo X.-K."/>
            <person name="Danchin A."/>
            <person name="Saint Girons I."/>
            <person name="Somerville R.L."/>
            <person name="Wen Y.-M."/>
            <person name="Shi M.-H."/>
            <person name="Chen Z."/>
            <person name="Xu J.-G."/>
            <person name="Zhao G.-P."/>
        </authorList>
    </citation>
    <scope>NUCLEOTIDE SEQUENCE [LARGE SCALE GENOMIC DNA]</scope>
    <source>
        <strain>56601</strain>
    </source>
</reference>
<gene>
    <name evidence="1" type="primary">glmS</name>
    <name type="ordered locus">LA_3801</name>
</gene>
<accession>Q8EZQ1</accession>
<protein>
    <recommendedName>
        <fullName evidence="1">Glutamine--fructose-6-phosphate aminotransferase [isomerizing]</fullName>
        <ecNumber evidence="1">2.6.1.16</ecNumber>
    </recommendedName>
    <alternativeName>
        <fullName evidence="1">D-fructose-6-phosphate amidotransferase</fullName>
    </alternativeName>
    <alternativeName>
        <fullName evidence="1">GFAT</fullName>
    </alternativeName>
    <alternativeName>
        <fullName evidence="1">Glucosamine-6-phosphate synthase</fullName>
    </alternativeName>
    <alternativeName>
        <fullName evidence="1">Hexosephosphate aminotransferase</fullName>
    </alternativeName>
    <alternativeName>
        <fullName evidence="1">L-glutamine--D-fructose-6-phosphate amidotransferase</fullName>
    </alternativeName>
</protein>
<proteinExistence type="inferred from homology"/>
<evidence type="ECO:0000255" key="1">
    <source>
        <dbReference type="HAMAP-Rule" id="MF_00164"/>
    </source>
</evidence>
<organism>
    <name type="scientific">Leptospira interrogans serogroup Icterohaemorrhagiae serovar Lai (strain 56601)</name>
    <dbReference type="NCBI Taxonomy" id="189518"/>
    <lineage>
        <taxon>Bacteria</taxon>
        <taxon>Pseudomonadati</taxon>
        <taxon>Spirochaetota</taxon>
        <taxon>Spirochaetia</taxon>
        <taxon>Leptospirales</taxon>
        <taxon>Leptospiraceae</taxon>
        <taxon>Leptospira</taxon>
    </lineage>
</organism>